<dbReference type="EC" id="7.6.2.-" evidence="1"/>
<dbReference type="EMBL" id="CP000151">
    <property type="protein sequence ID" value="ABB08329.1"/>
    <property type="status" value="ALT_INIT"/>
    <property type="molecule type" value="Genomic_DNA"/>
</dbReference>
<dbReference type="RefSeq" id="WP_041493061.1">
    <property type="nucleotide sequence ID" value="NC_007510.1"/>
</dbReference>
<dbReference type="SMR" id="Q39GT7"/>
<dbReference type="GeneID" id="45094635"/>
<dbReference type="KEGG" id="bur:Bcep18194_A4734"/>
<dbReference type="PATRIC" id="fig|482957.22.peg.1650"/>
<dbReference type="HOGENOM" id="CLU_000604_1_2_4"/>
<dbReference type="Proteomes" id="UP000002705">
    <property type="component" value="Chromosome 1"/>
</dbReference>
<dbReference type="GO" id="GO:0005886">
    <property type="term" value="C:plasma membrane"/>
    <property type="evidence" value="ECO:0007669"/>
    <property type="project" value="UniProtKB-SubCell"/>
</dbReference>
<dbReference type="GO" id="GO:0005524">
    <property type="term" value="F:ATP binding"/>
    <property type="evidence" value="ECO:0007669"/>
    <property type="project" value="UniProtKB-KW"/>
</dbReference>
<dbReference type="GO" id="GO:0016887">
    <property type="term" value="F:ATP hydrolysis activity"/>
    <property type="evidence" value="ECO:0007669"/>
    <property type="project" value="InterPro"/>
</dbReference>
<dbReference type="GO" id="GO:0022857">
    <property type="term" value="F:transmembrane transporter activity"/>
    <property type="evidence" value="ECO:0007669"/>
    <property type="project" value="InterPro"/>
</dbReference>
<dbReference type="CDD" id="cd03230">
    <property type="entry name" value="ABC_DR_subfamily_A"/>
    <property type="match status" value="1"/>
</dbReference>
<dbReference type="FunFam" id="3.40.50.300:FF:000589">
    <property type="entry name" value="ABC transporter, ATP-binding subunit"/>
    <property type="match status" value="1"/>
</dbReference>
<dbReference type="Gene3D" id="3.40.50.300">
    <property type="entry name" value="P-loop containing nucleotide triphosphate hydrolases"/>
    <property type="match status" value="1"/>
</dbReference>
<dbReference type="InterPro" id="IPR003593">
    <property type="entry name" value="AAA+_ATPase"/>
</dbReference>
<dbReference type="InterPro" id="IPR003439">
    <property type="entry name" value="ABC_transporter-like_ATP-bd"/>
</dbReference>
<dbReference type="InterPro" id="IPR017871">
    <property type="entry name" value="ABC_transporter-like_CS"/>
</dbReference>
<dbReference type="InterPro" id="IPR050763">
    <property type="entry name" value="ABC_transporter_ATP-binding"/>
</dbReference>
<dbReference type="InterPro" id="IPR005978">
    <property type="entry name" value="ABC_transptNodI"/>
</dbReference>
<dbReference type="InterPro" id="IPR027417">
    <property type="entry name" value="P-loop_NTPase"/>
</dbReference>
<dbReference type="NCBIfam" id="TIGR01288">
    <property type="entry name" value="nodI"/>
    <property type="match status" value="1"/>
</dbReference>
<dbReference type="NCBIfam" id="NF010060">
    <property type="entry name" value="PRK13537.1"/>
    <property type="match status" value="1"/>
</dbReference>
<dbReference type="PANTHER" id="PTHR42711">
    <property type="entry name" value="ABC TRANSPORTER ATP-BINDING PROTEIN"/>
    <property type="match status" value="1"/>
</dbReference>
<dbReference type="PANTHER" id="PTHR42711:SF5">
    <property type="entry name" value="ABC TRANSPORTER ATP-BINDING PROTEIN NATA"/>
    <property type="match status" value="1"/>
</dbReference>
<dbReference type="Pfam" id="PF00005">
    <property type="entry name" value="ABC_tran"/>
    <property type="match status" value="1"/>
</dbReference>
<dbReference type="SMART" id="SM00382">
    <property type="entry name" value="AAA"/>
    <property type="match status" value="1"/>
</dbReference>
<dbReference type="SUPFAM" id="SSF52540">
    <property type="entry name" value="P-loop containing nucleoside triphosphate hydrolases"/>
    <property type="match status" value="1"/>
</dbReference>
<dbReference type="PROSITE" id="PS00211">
    <property type="entry name" value="ABC_TRANSPORTER_1"/>
    <property type="match status" value="1"/>
</dbReference>
<dbReference type="PROSITE" id="PS50893">
    <property type="entry name" value="ABC_TRANSPORTER_2"/>
    <property type="match status" value="1"/>
</dbReference>
<dbReference type="PROSITE" id="PS51240">
    <property type="entry name" value="NODI"/>
    <property type="match status" value="1"/>
</dbReference>
<feature type="chain" id="PRO_0000272599" description="Nod factor export ATP-binding protein I">
    <location>
        <begin position="1"/>
        <end position="304"/>
    </location>
</feature>
<feature type="domain" description="ABC transporter" evidence="1">
    <location>
        <begin position="6"/>
        <end position="236"/>
    </location>
</feature>
<feature type="binding site" evidence="1">
    <location>
        <begin position="38"/>
        <end position="45"/>
    </location>
    <ligand>
        <name>ATP</name>
        <dbReference type="ChEBI" id="CHEBI:30616"/>
    </ligand>
</feature>
<organism>
    <name type="scientific">Burkholderia lata (strain ATCC 17760 / DSM 23089 / LMG 22485 / NCIMB 9086 / R18194 / 383)</name>
    <dbReference type="NCBI Taxonomy" id="482957"/>
    <lineage>
        <taxon>Bacteria</taxon>
        <taxon>Pseudomonadati</taxon>
        <taxon>Pseudomonadota</taxon>
        <taxon>Betaproteobacteria</taxon>
        <taxon>Burkholderiales</taxon>
        <taxon>Burkholderiaceae</taxon>
        <taxon>Burkholderia</taxon>
        <taxon>Burkholderia cepacia complex</taxon>
    </lineage>
</organism>
<keyword id="KW-0067">ATP-binding</keyword>
<keyword id="KW-0997">Cell inner membrane</keyword>
<keyword id="KW-1003">Cell membrane</keyword>
<keyword id="KW-0472">Membrane</keyword>
<keyword id="KW-0536">Nodulation</keyword>
<keyword id="KW-0547">Nucleotide-binding</keyword>
<keyword id="KW-1278">Translocase</keyword>
<keyword id="KW-0813">Transport</keyword>
<protein>
    <recommendedName>
        <fullName evidence="1">Nod factor export ATP-binding protein I</fullName>
        <ecNumber evidence="1">7.6.2.-</ecNumber>
    </recommendedName>
    <alternativeName>
        <fullName evidence="1">Nodulation ATP-binding protein I</fullName>
    </alternativeName>
</protein>
<sequence length="304" mass="33637">MPVAPIDFRNVEKRFGDKLVVNGLSFTVQAGECYGLLGPNGAGKTTTLKMLLGLTHPDAGTISLCGEPVPSRARHARQRVGVVPQFDNLDPDFTVRENLLVFGRYFGMSAQAAHALVKPLLEFAKLENKADAKVGELSGGMKRRLTLARALVNDPDVLVLDEPTTGLDPQARHLMWERLRSLLARGKTILITTHFMEEAERLCDRLCVIEEGRKIAEGAPHALIESEIGCDVIEIYGPDPATLRDELSAFAKHTEISGETLFCYVSDPEPLRARLKGRTGLRYLHRPANLEDVFLRLTGREMQD</sequence>
<gene>
    <name evidence="1" type="primary">nodI</name>
    <name type="ordered locus">Bcep18194_A4734</name>
</gene>
<name>NODI_BURL3</name>
<proteinExistence type="inferred from homology"/>
<comment type="function">
    <text evidence="1">Part of the ABC transporter complex NodIJ involved in the export of the nodulation factors (Nod factors), the bacterial signal molecules that induce symbiosis and subsequent nodulation induction. Nod factors are LCO (lipo-chitin oligosaccharide), a modified beta-1,4-linked N-acetylglucosamine oligosaccharide. This subunit is responsible for energy coupling to the transport system.</text>
</comment>
<comment type="subunit">
    <text evidence="1">The complex is composed of two ATP-binding proteins (NodI) and two transmembrane proteins (NodJ).</text>
</comment>
<comment type="subcellular location">
    <subcellularLocation>
        <location evidence="1">Cell inner membrane</location>
        <topology evidence="1">Peripheral membrane protein</topology>
    </subcellularLocation>
</comment>
<comment type="similarity">
    <text evidence="1">Belongs to the ABC transporter superfamily. Lipooligosaccharide exporter (TC 3.A.1.102) family.</text>
</comment>
<comment type="sequence caution" evidence="2">
    <conflict type="erroneous initiation">
        <sequence resource="EMBL-CDS" id="ABB08329"/>
    </conflict>
</comment>
<evidence type="ECO:0000255" key="1">
    <source>
        <dbReference type="HAMAP-Rule" id="MF_01704"/>
    </source>
</evidence>
<evidence type="ECO:0000305" key="2"/>
<reference key="1">
    <citation type="submission" date="2005-10" db="EMBL/GenBank/DDBJ databases">
        <title>Complete sequence of chromosome 1 of Burkholderia sp. 383.</title>
        <authorList>
            <consortium name="US DOE Joint Genome Institute"/>
            <person name="Copeland A."/>
            <person name="Lucas S."/>
            <person name="Lapidus A."/>
            <person name="Barry K."/>
            <person name="Detter J.C."/>
            <person name="Glavina T."/>
            <person name="Hammon N."/>
            <person name="Israni S."/>
            <person name="Pitluck S."/>
            <person name="Chain P."/>
            <person name="Malfatti S."/>
            <person name="Shin M."/>
            <person name="Vergez L."/>
            <person name="Schmutz J."/>
            <person name="Larimer F."/>
            <person name="Land M."/>
            <person name="Kyrpides N."/>
            <person name="Lykidis A."/>
            <person name="Richardson P."/>
        </authorList>
    </citation>
    <scope>NUCLEOTIDE SEQUENCE [LARGE SCALE GENOMIC DNA]</scope>
    <source>
        <strain>ATCC 17760 / DSM 23089 / LMG 22485 / NCIMB 9086 / R18194 / 383</strain>
    </source>
</reference>
<accession>Q39GT7</accession>